<name>NUDI_SALSV</name>
<sequence>MRQRTIVCPLIQNDGCYLLCKMADNRGVFPGQWALSGGGVEPGERIEEALRREVREELGEQLILSDITPWTFRDDIRVKTYADGRQEEIYMIYLIFDCVSANRDICINDEFQDYAWVKPEELALYDLNVATRHTLALKGLL</sequence>
<dbReference type="EC" id="3.6.1.9" evidence="1"/>
<dbReference type="EC" id="3.6.1.12" evidence="1"/>
<dbReference type="EC" id="3.6.1.-" evidence="1"/>
<dbReference type="EC" id="3.6.1.23" evidence="1"/>
<dbReference type="EMBL" id="CP001127">
    <property type="protein sequence ID" value="ACF90643.1"/>
    <property type="molecule type" value="Genomic_DNA"/>
</dbReference>
<dbReference type="RefSeq" id="WP_001249905.1">
    <property type="nucleotide sequence ID" value="NC_011094.1"/>
</dbReference>
<dbReference type="SMR" id="B4TPH8"/>
<dbReference type="KEGG" id="sew:SeSA_A2523"/>
<dbReference type="HOGENOM" id="CLU_037162_31_0_6"/>
<dbReference type="Proteomes" id="UP000001865">
    <property type="component" value="Chromosome"/>
</dbReference>
<dbReference type="GO" id="GO:0047840">
    <property type="term" value="F:dCTP diphosphatase activity"/>
    <property type="evidence" value="ECO:0007669"/>
    <property type="project" value="UniProtKB-EC"/>
</dbReference>
<dbReference type="GO" id="GO:0036218">
    <property type="term" value="F:dTTP diphosphatase activity"/>
    <property type="evidence" value="ECO:0007669"/>
    <property type="project" value="RHEA"/>
</dbReference>
<dbReference type="GO" id="GO:0004170">
    <property type="term" value="F:dUTP diphosphatase activity"/>
    <property type="evidence" value="ECO:0007669"/>
    <property type="project" value="UniProtKB-EC"/>
</dbReference>
<dbReference type="GO" id="GO:0000287">
    <property type="term" value="F:magnesium ion binding"/>
    <property type="evidence" value="ECO:0007669"/>
    <property type="project" value="UniProtKB-UniRule"/>
</dbReference>
<dbReference type="CDD" id="cd04696">
    <property type="entry name" value="NUDIX_NudI"/>
    <property type="match status" value="1"/>
</dbReference>
<dbReference type="Gene3D" id="3.90.79.10">
    <property type="entry name" value="Nucleoside Triphosphate Pyrophosphohydrolase"/>
    <property type="match status" value="1"/>
</dbReference>
<dbReference type="HAMAP" id="MF_01846">
    <property type="entry name" value="Nudix_NudI"/>
    <property type="match status" value="1"/>
</dbReference>
<dbReference type="InterPro" id="IPR023781">
    <property type="entry name" value="Nucleoside_triphosphatase_NudI"/>
</dbReference>
<dbReference type="InterPro" id="IPR020476">
    <property type="entry name" value="Nudix_hydrolase"/>
</dbReference>
<dbReference type="InterPro" id="IPR015797">
    <property type="entry name" value="NUDIX_hydrolase-like_dom_sf"/>
</dbReference>
<dbReference type="InterPro" id="IPR020084">
    <property type="entry name" value="NUDIX_hydrolase_CS"/>
</dbReference>
<dbReference type="InterPro" id="IPR000086">
    <property type="entry name" value="NUDIX_hydrolase_dom"/>
</dbReference>
<dbReference type="NCBIfam" id="NF012016">
    <property type="entry name" value="PRK15472.1"/>
    <property type="match status" value="1"/>
</dbReference>
<dbReference type="PANTHER" id="PTHR43046">
    <property type="entry name" value="GDP-MANNOSE MANNOSYL HYDROLASE"/>
    <property type="match status" value="1"/>
</dbReference>
<dbReference type="PANTHER" id="PTHR43046:SF14">
    <property type="entry name" value="MUTT_NUDIX FAMILY PROTEIN"/>
    <property type="match status" value="1"/>
</dbReference>
<dbReference type="Pfam" id="PF00293">
    <property type="entry name" value="NUDIX"/>
    <property type="match status" value="1"/>
</dbReference>
<dbReference type="PRINTS" id="PR00502">
    <property type="entry name" value="NUDIXFAMILY"/>
</dbReference>
<dbReference type="SUPFAM" id="SSF55811">
    <property type="entry name" value="Nudix"/>
    <property type="match status" value="1"/>
</dbReference>
<dbReference type="PROSITE" id="PS51462">
    <property type="entry name" value="NUDIX"/>
    <property type="match status" value="1"/>
</dbReference>
<dbReference type="PROSITE" id="PS00893">
    <property type="entry name" value="NUDIX_BOX"/>
    <property type="match status" value="1"/>
</dbReference>
<protein>
    <recommendedName>
        <fullName evidence="1">Nucleoside triphosphatase NudI</fullName>
        <ecNumber evidence="1">3.6.1.9</ecNumber>
    </recommendedName>
    <alternativeName>
        <fullName evidence="1">Nucleotide diphosphatase NudI</fullName>
    </alternativeName>
    <alternativeName>
        <fullName evidence="1">Pyrimidine deoxynucleoside triphosphate diphosphatase</fullName>
    </alternativeName>
    <alternativeName>
        <fullName evidence="1">dCTP diphosphatase</fullName>
        <ecNumber evidence="1">3.6.1.12</ecNumber>
    </alternativeName>
    <alternativeName>
        <fullName evidence="1">dTTP diphosphatase</fullName>
        <ecNumber evidence="1">3.6.1.-</ecNumber>
    </alternativeName>
    <alternativeName>
        <fullName evidence="1">dUTP diphosphatase</fullName>
        <ecNumber evidence="1">3.6.1.23</ecNumber>
    </alternativeName>
</protein>
<evidence type="ECO:0000255" key="1">
    <source>
        <dbReference type="HAMAP-Rule" id="MF_01846"/>
    </source>
</evidence>
<accession>B4TPH8</accession>
<gene>
    <name evidence="1" type="primary">nudI</name>
    <name type="ordered locus">SeSA_A2523</name>
</gene>
<organism>
    <name type="scientific">Salmonella schwarzengrund (strain CVM19633)</name>
    <dbReference type="NCBI Taxonomy" id="439843"/>
    <lineage>
        <taxon>Bacteria</taxon>
        <taxon>Pseudomonadati</taxon>
        <taxon>Pseudomonadota</taxon>
        <taxon>Gammaproteobacteria</taxon>
        <taxon>Enterobacterales</taxon>
        <taxon>Enterobacteriaceae</taxon>
        <taxon>Salmonella</taxon>
    </lineage>
</organism>
<keyword id="KW-0378">Hydrolase</keyword>
<keyword id="KW-0460">Magnesium</keyword>
<proteinExistence type="inferred from homology"/>
<comment type="function">
    <text evidence="1">Catalyzes the hydrolysis of nucleoside triphosphates, with a preference for pyrimidine deoxynucleoside triphosphates (dUTP, dTTP and dCTP).</text>
</comment>
<comment type="catalytic activity">
    <reaction evidence="1">
        <text>a ribonucleoside 5'-triphosphate + H2O = a ribonucleoside 5'-phosphate + diphosphate + H(+)</text>
        <dbReference type="Rhea" id="RHEA:23996"/>
        <dbReference type="ChEBI" id="CHEBI:15377"/>
        <dbReference type="ChEBI" id="CHEBI:15378"/>
        <dbReference type="ChEBI" id="CHEBI:33019"/>
        <dbReference type="ChEBI" id="CHEBI:58043"/>
        <dbReference type="ChEBI" id="CHEBI:61557"/>
        <dbReference type="EC" id="3.6.1.9"/>
    </reaction>
</comment>
<comment type="catalytic activity">
    <reaction evidence="1">
        <text>a 2'-deoxyribonucleoside 5'-triphosphate + H2O = a 2'-deoxyribonucleoside 5'-phosphate + diphosphate + H(+)</text>
        <dbReference type="Rhea" id="RHEA:44644"/>
        <dbReference type="ChEBI" id="CHEBI:15377"/>
        <dbReference type="ChEBI" id="CHEBI:15378"/>
        <dbReference type="ChEBI" id="CHEBI:33019"/>
        <dbReference type="ChEBI" id="CHEBI:61560"/>
        <dbReference type="ChEBI" id="CHEBI:65317"/>
        <dbReference type="EC" id="3.6.1.9"/>
    </reaction>
</comment>
<comment type="catalytic activity">
    <reaction evidence="1">
        <text>dUTP + H2O = dUMP + diphosphate + H(+)</text>
        <dbReference type="Rhea" id="RHEA:10248"/>
        <dbReference type="ChEBI" id="CHEBI:15377"/>
        <dbReference type="ChEBI" id="CHEBI:15378"/>
        <dbReference type="ChEBI" id="CHEBI:33019"/>
        <dbReference type="ChEBI" id="CHEBI:61555"/>
        <dbReference type="ChEBI" id="CHEBI:246422"/>
        <dbReference type="EC" id="3.6.1.9"/>
    </reaction>
</comment>
<comment type="catalytic activity">
    <reaction evidence="1">
        <text>dUTP + H2O = dUMP + diphosphate + H(+)</text>
        <dbReference type="Rhea" id="RHEA:10248"/>
        <dbReference type="ChEBI" id="CHEBI:15377"/>
        <dbReference type="ChEBI" id="CHEBI:15378"/>
        <dbReference type="ChEBI" id="CHEBI:33019"/>
        <dbReference type="ChEBI" id="CHEBI:61555"/>
        <dbReference type="ChEBI" id="CHEBI:246422"/>
        <dbReference type="EC" id="3.6.1.23"/>
    </reaction>
</comment>
<comment type="catalytic activity">
    <reaction evidence="1">
        <text>dTTP + H2O = dTMP + diphosphate + H(+)</text>
        <dbReference type="Rhea" id="RHEA:28534"/>
        <dbReference type="ChEBI" id="CHEBI:15377"/>
        <dbReference type="ChEBI" id="CHEBI:15378"/>
        <dbReference type="ChEBI" id="CHEBI:33019"/>
        <dbReference type="ChEBI" id="CHEBI:37568"/>
        <dbReference type="ChEBI" id="CHEBI:63528"/>
        <dbReference type="EC" id="3.6.1.9"/>
    </reaction>
</comment>
<comment type="catalytic activity">
    <reaction evidence="1">
        <text>dCTP + H2O = dCMP + diphosphate + H(+)</text>
        <dbReference type="Rhea" id="RHEA:22636"/>
        <dbReference type="ChEBI" id="CHEBI:15377"/>
        <dbReference type="ChEBI" id="CHEBI:15378"/>
        <dbReference type="ChEBI" id="CHEBI:33019"/>
        <dbReference type="ChEBI" id="CHEBI:57566"/>
        <dbReference type="ChEBI" id="CHEBI:61481"/>
        <dbReference type="EC" id="3.6.1.9"/>
    </reaction>
</comment>
<comment type="catalytic activity">
    <reaction evidence="1">
        <text>dCTP + H2O = dCMP + diphosphate + H(+)</text>
        <dbReference type="Rhea" id="RHEA:22636"/>
        <dbReference type="ChEBI" id="CHEBI:15377"/>
        <dbReference type="ChEBI" id="CHEBI:15378"/>
        <dbReference type="ChEBI" id="CHEBI:33019"/>
        <dbReference type="ChEBI" id="CHEBI:57566"/>
        <dbReference type="ChEBI" id="CHEBI:61481"/>
        <dbReference type="EC" id="3.6.1.12"/>
    </reaction>
</comment>
<comment type="cofactor">
    <cofactor evidence="1">
        <name>Mg(2+)</name>
        <dbReference type="ChEBI" id="CHEBI:18420"/>
    </cofactor>
</comment>
<comment type="subunit">
    <text evidence="1">Monomer.</text>
</comment>
<comment type="similarity">
    <text evidence="1">Belongs to the Nudix hydrolase family. NudI subfamily.</text>
</comment>
<reference key="1">
    <citation type="journal article" date="2011" name="J. Bacteriol.">
        <title>Comparative genomics of 28 Salmonella enterica isolates: evidence for CRISPR-mediated adaptive sublineage evolution.</title>
        <authorList>
            <person name="Fricke W.F."/>
            <person name="Mammel M.K."/>
            <person name="McDermott P.F."/>
            <person name="Tartera C."/>
            <person name="White D.G."/>
            <person name="Leclerc J.E."/>
            <person name="Ravel J."/>
            <person name="Cebula T.A."/>
        </authorList>
    </citation>
    <scope>NUCLEOTIDE SEQUENCE [LARGE SCALE GENOMIC DNA]</scope>
    <source>
        <strain>CVM19633</strain>
    </source>
</reference>
<feature type="chain" id="PRO_1000188494" description="Nucleoside triphosphatase NudI">
    <location>
        <begin position="1"/>
        <end position="141"/>
    </location>
</feature>
<feature type="domain" description="Nudix hydrolase" evidence="1">
    <location>
        <begin position="1"/>
        <end position="141"/>
    </location>
</feature>
<feature type="short sequence motif" description="Nudix box">
    <location>
        <begin position="38"/>
        <end position="59"/>
    </location>
</feature>